<feature type="signal peptide" evidence="2">
    <location>
        <begin position="1"/>
        <end position="19"/>
    </location>
</feature>
<feature type="chain" id="PRO_0000394054" description="Probable 1,4-beta-D-glucan cellobiohydrolase C">
    <location>
        <begin position="20"/>
        <end position="450"/>
    </location>
</feature>
<feature type="domain" description="CBM1" evidence="3">
    <location>
        <begin position="20"/>
        <end position="55"/>
    </location>
</feature>
<feature type="region of interest" description="Thr-rich linker">
    <location>
        <begin position="59"/>
        <end position="90"/>
    </location>
</feature>
<feature type="region of interest" description="Disordered" evidence="6">
    <location>
        <begin position="63"/>
        <end position="89"/>
    </location>
</feature>
<feature type="region of interest" description="Catalytic">
    <location>
        <begin position="91"/>
        <end position="450"/>
    </location>
</feature>
<feature type="active site" evidence="4">
    <location>
        <position position="180"/>
    </location>
</feature>
<feature type="active site" description="Proton donor" evidence="5">
    <location>
        <position position="226"/>
    </location>
</feature>
<feature type="active site" description="Nucleophile" evidence="4">
    <location>
        <position position="405"/>
    </location>
</feature>
<feature type="glycosylation site" description="N-linked (GlcNAc...) asparagine" evidence="2">
    <location>
        <position position="409"/>
    </location>
</feature>
<feature type="disulfide bond" evidence="1">
    <location>
        <begin position="27"/>
        <end position="44"/>
    </location>
</feature>
<feature type="disulfide bond" evidence="1">
    <location>
        <begin position="38"/>
        <end position="54"/>
    </location>
</feature>
<feature type="disulfide bond" evidence="1">
    <location>
        <begin position="181"/>
        <end position="240"/>
    </location>
</feature>
<feature type="disulfide bond" evidence="1">
    <location>
        <begin position="372"/>
        <end position="419"/>
    </location>
</feature>
<proteinExistence type="inferred from homology"/>
<evidence type="ECO:0000250" key="1"/>
<evidence type="ECO:0000255" key="2"/>
<evidence type="ECO:0000255" key="3">
    <source>
        <dbReference type="PROSITE-ProRule" id="PRU00597"/>
    </source>
</evidence>
<evidence type="ECO:0000255" key="4">
    <source>
        <dbReference type="PROSITE-ProRule" id="PRU10056"/>
    </source>
</evidence>
<evidence type="ECO:0000255" key="5">
    <source>
        <dbReference type="PROSITE-ProRule" id="PRU10057"/>
    </source>
</evidence>
<evidence type="ECO:0000256" key="6">
    <source>
        <dbReference type="SAM" id="MobiDB-lite"/>
    </source>
</evidence>
<evidence type="ECO:0000305" key="7"/>
<gene>
    <name type="primary">cbhC</name>
    <name type="ORF">NFIA_002990</name>
</gene>
<keyword id="KW-0119">Carbohydrate metabolism</keyword>
<keyword id="KW-0136">Cellulose degradation</keyword>
<keyword id="KW-1015">Disulfide bond</keyword>
<keyword id="KW-0325">Glycoprotein</keyword>
<keyword id="KW-0326">Glycosidase</keyword>
<keyword id="KW-0378">Hydrolase</keyword>
<keyword id="KW-0624">Polysaccharide degradation</keyword>
<keyword id="KW-1185">Reference proteome</keyword>
<keyword id="KW-0964">Secreted</keyword>
<keyword id="KW-0732">Signal</keyword>
<organism>
    <name type="scientific">Neosartorya fischeri (strain ATCC 1020 / DSM 3700 / CBS 544.65 / FGSC A1164 / JCM 1740 / NRRL 181 / WB 181)</name>
    <name type="common">Aspergillus fischerianus</name>
    <dbReference type="NCBI Taxonomy" id="331117"/>
    <lineage>
        <taxon>Eukaryota</taxon>
        <taxon>Fungi</taxon>
        <taxon>Dikarya</taxon>
        <taxon>Ascomycota</taxon>
        <taxon>Pezizomycotina</taxon>
        <taxon>Eurotiomycetes</taxon>
        <taxon>Eurotiomycetidae</taxon>
        <taxon>Eurotiales</taxon>
        <taxon>Aspergillaceae</taxon>
        <taxon>Aspergillus</taxon>
        <taxon>Aspergillus subgen. Fumigati</taxon>
    </lineage>
</organism>
<accession>A1DJQ7</accession>
<protein>
    <recommendedName>
        <fullName>Probable 1,4-beta-D-glucan cellobiohydrolase C</fullName>
        <ecNumber>3.2.1.91</ecNumber>
    </recommendedName>
    <alternativeName>
        <fullName>Beta-glucancellobiohydrolase C</fullName>
    </alternativeName>
    <alternativeName>
        <fullName>Exocellobiohydrolase C</fullName>
    </alternativeName>
    <alternativeName>
        <fullName>Exoglucanase C</fullName>
    </alternativeName>
</protein>
<sequence length="450" mass="47383">MKHLASSIALTLLLPAVQAQQTVWGQCGGQGWSGPTNCVAGAACSTLNPYYAQCIPGATATSTTLSTTTTTQTTTKPTTTGPTTSAPTVTASGNPFSGYQLYANPYYSSEVHTLAMPSLPSSLQPKASAVAEVPSFVWLDVAAKVPTMGTYLADIQAKNKAGASPPIAGIFVVYDLPDRDCAALASNGEYSIANNGVANYKAYIDAIRAQLVKYSDVHTILVIEPDSLANLVTNLNVAKCANAQSAYLECVDYALKQLNLPNVAMYLDAGHAGWLGWPANLGPAATLFAKVYTDAGSPAALRGLATNVANYNAWSLSTCPSYTQGDPNCDEKKYINAMAPLLKNAGFDAHFIMDTSRNGVQPTKQSAWGDWCNVIGTGFGVRPSTNTGDPLQDAFVWIKPGGESDGTSNSSSARYDAHCGYSDALQPAPEAGTWFQAYFEQLLTNANPSF</sequence>
<comment type="function">
    <text evidence="1">The biological conversion of cellulose to glucose generally requires three types of hydrolytic enzymes: (1) Endoglucanases which cut internal beta-1,4-glucosidic bonds; (2) Exocellobiohydrolases that cut the disaccharide cellobiose from the non-reducing end of the cellulose polymer chain; (3) Beta-1,4-glucosidases which hydrolyze the cellobiose and other short cello-oligosaccharides to glucose.</text>
</comment>
<comment type="catalytic activity">
    <reaction>
        <text>Hydrolysis of (1-&gt;4)-beta-D-glucosidic linkages in cellulose and cellotetraose, releasing cellobiose from the non-reducing ends of the chains.</text>
        <dbReference type="EC" id="3.2.1.91"/>
    </reaction>
</comment>
<comment type="subcellular location">
    <subcellularLocation>
        <location evidence="1">Secreted</location>
    </subcellularLocation>
</comment>
<comment type="domain">
    <text>Has a modular structure: a carbohydrate-binding module (CBM) at the N-terminus, a linker rich in threonines, and a C-terminal exocellobiohydrolase catalytic module. The genes for catalytic modules and CBMs seem to have evolved separately and have been linked by gene fusion.</text>
</comment>
<comment type="similarity">
    <text evidence="7">Belongs to the glycosyl hydrolase 6 (cellulase B) family.</text>
</comment>
<reference key="1">
    <citation type="journal article" date="2008" name="PLoS Genet.">
        <title>Genomic islands in the pathogenic filamentous fungus Aspergillus fumigatus.</title>
        <authorList>
            <person name="Fedorova N.D."/>
            <person name="Khaldi N."/>
            <person name="Joardar V.S."/>
            <person name="Maiti R."/>
            <person name="Amedeo P."/>
            <person name="Anderson M.J."/>
            <person name="Crabtree J."/>
            <person name="Silva J.C."/>
            <person name="Badger J.H."/>
            <person name="Albarraq A."/>
            <person name="Angiuoli S."/>
            <person name="Bussey H."/>
            <person name="Bowyer P."/>
            <person name="Cotty P.J."/>
            <person name="Dyer P.S."/>
            <person name="Egan A."/>
            <person name="Galens K."/>
            <person name="Fraser-Liggett C.M."/>
            <person name="Haas B.J."/>
            <person name="Inman J.M."/>
            <person name="Kent R."/>
            <person name="Lemieux S."/>
            <person name="Malavazi I."/>
            <person name="Orvis J."/>
            <person name="Roemer T."/>
            <person name="Ronning C.M."/>
            <person name="Sundaram J.P."/>
            <person name="Sutton G."/>
            <person name="Turner G."/>
            <person name="Venter J.C."/>
            <person name="White O.R."/>
            <person name="Whitty B.R."/>
            <person name="Youngman P."/>
            <person name="Wolfe K.H."/>
            <person name="Goldman G.H."/>
            <person name="Wortman J.R."/>
            <person name="Jiang B."/>
            <person name="Denning D.W."/>
            <person name="Nierman W.C."/>
        </authorList>
    </citation>
    <scope>NUCLEOTIDE SEQUENCE [LARGE SCALE GENOMIC DNA]</scope>
    <source>
        <strain>ATCC 1020 / DSM 3700 / CBS 544.65 / FGSC A1164 / JCM 1740 / NRRL 181 / WB 181</strain>
    </source>
</reference>
<name>CBHC_NEOFI</name>
<dbReference type="EC" id="3.2.1.91"/>
<dbReference type="EMBL" id="DS027697">
    <property type="protein sequence ID" value="EAW16946.1"/>
    <property type="molecule type" value="Genomic_DNA"/>
</dbReference>
<dbReference type="RefSeq" id="XP_001258843.1">
    <property type="nucleotide sequence ID" value="XM_001258842.1"/>
</dbReference>
<dbReference type="SMR" id="A1DJQ7"/>
<dbReference type="STRING" id="331117.A1DJQ7"/>
<dbReference type="GlyCosmos" id="A1DJQ7">
    <property type="glycosylation" value="1 site, No reported glycans"/>
</dbReference>
<dbReference type="EnsemblFungi" id="EAW16946">
    <property type="protein sequence ID" value="EAW16946"/>
    <property type="gene ID" value="NFIA_002990"/>
</dbReference>
<dbReference type="GeneID" id="4585216"/>
<dbReference type="KEGG" id="nfi:NFIA_002990"/>
<dbReference type="VEuPathDB" id="FungiDB:NFIA_002990"/>
<dbReference type="eggNOG" id="ENOG502QWHE">
    <property type="taxonomic scope" value="Eukaryota"/>
</dbReference>
<dbReference type="HOGENOM" id="CLU_015488_0_0_1"/>
<dbReference type="OMA" id="EVHTLAM"/>
<dbReference type="OrthoDB" id="64893at2759"/>
<dbReference type="Proteomes" id="UP000006702">
    <property type="component" value="Unassembled WGS sequence"/>
</dbReference>
<dbReference type="GO" id="GO:0005576">
    <property type="term" value="C:extracellular region"/>
    <property type="evidence" value="ECO:0007669"/>
    <property type="project" value="UniProtKB-SubCell"/>
</dbReference>
<dbReference type="GO" id="GO:0016162">
    <property type="term" value="F:cellulose 1,4-beta-cellobiosidase activity"/>
    <property type="evidence" value="ECO:0007669"/>
    <property type="project" value="UniProtKB-EC"/>
</dbReference>
<dbReference type="GO" id="GO:0030248">
    <property type="term" value="F:cellulose binding"/>
    <property type="evidence" value="ECO:0007669"/>
    <property type="project" value="InterPro"/>
</dbReference>
<dbReference type="GO" id="GO:0030245">
    <property type="term" value="P:cellulose catabolic process"/>
    <property type="evidence" value="ECO:0007669"/>
    <property type="project" value="UniProtKB-KW"/>
</dbReference>
<dbReference type="FunFam" id="3.20.20.40:FF:000001">
    <property type="entry name" value="Glucanase"/>
    <property type="match status" value="1"/>
</dbReference>
<dbReference type="Gene3D" id="3.20.20.40">
    <property type="entry name" value="1, 4-beta cellobiohydrolase"/>
    <property type="match status" value="1"/>
</dbReference>
<dbReference type="InterPro" id="IPR016288">
    <property type="entry name" value="Beta_cellobiohydrolase"/>
</dbReference>
<dbReference type="InterPro" id="IPR036434">
    <property type="entry name" value="Beta_cellobiohydrolase_sf"/>
</dbReference>
<dbReference type="InterPro" id="IPR035971">
    <property type="entry name" value="CBD_sf"/>
</dbReference>
<dbReference type="InterPro" id="IPR000254">
    <property type="entry name" value="Cellulose-bd_dom_fun"/>
</dbReference>
<dbReference type="InterPro" id="IPR001524">
    <property type="entry name" value="Glyco_hydro_6_CS"/>
</dbReference>
<dbReference type="PANTHER" id="PTHR34876">
    <property type="match status" value="1"/>
</dbReference>
<dbReference type="PANTHER" id="PTHR34876:SF4">
    <property type="entry name" value="1,4-BETA-D-GLUCAN CELLOBIOHYDROLASE C-RELATED"/>
    <property type="match status" value="1"/>
</dbReference>
<dbReference type="Pfam" id="PF00734">
    <property type="entry name" value="CBM_1"/>
    <property type="match status" value="1"/>
</dbReference>
<dbReference type="Pfam" id="PF01341">
    <property type="entry name" value="Glyco_hydro_6"/>
    <property type="match status" value="1"/>
</dbReference>
<dbReference type="PIRSF" id="PIRSF001100">
    <property type="entry name" value="Beta_cellobiohydrolase"/>
    <property type="match status" value="1"/>
</dbReference>
<dbReference type="PRINTS" id="PR00733">
    <property type="entry name" value="GLHYDRLASE6"/>
</dbReference>
<dbReference type="SMART" id="SM00236">
    <property type="entry name" value="fCBD"/>
    <property type="match status" value="1"/>
</dbReference>
<dbReference type="SUPFAM" id="SSF57180">
    <property type="entry name" value="Cellulose-binding domain"/>
    <property type="match status" value="1"/>
</dbReference>
<dbReference type="SUPFAM" id="SSF51989">
    <property type="entry name" value="Glycosyl hydrolases family 6, cellulases"/>
    <property type="match status" value="1"/>
</dbReference>
<dbReference type="PROSITE" id="PS00562">
    <property type="entry name" value="CBM1_1"/>
    <property type="match status" value="1"/>
</dbReference>
<dbReference type="PROSITE" id="PS51164">
    <property type="entry name" value="CBM1_2"/>
    <property type="match status" value="1"/>
</dbReference>
<dbReference type="PROSITE" id="PS00655">
    <property type="entry name" value="GLYCOSYL_HYDROL_F6_1"/>
    <property type="match status" value="1"/>
</dbReference>
<dbReference type="PROSITE" id="PS00656">
    <property type="entry name" value="GLYCOSYL_HYDROL_F6_2"/>
    <property type="match status" value="1"/>
</dbReference>